<gene>
    <name type="primary">echdc1</name>
</gene>
<dbReference type="EC" id="4.1.1.94" evidence="1"/>
<dbReference type="EMBL" id="BC088922">
    <property type="protein sequence ID" value="AAH88922.1"/>
    <property type="molecule type" value="mRNA"/>
</dbReference>
<dbReference type="RefSeq" id="NP_001088953.1">
    <property type="nucleotide sequence ID" value="NM_001095484.1"/>
</dbReference>
<dbReference type="SMR" id="Q5HZQ8"/>
<dbReference type="GeneID" id="496330"/>
<dbReference type="KEGG" id="xla:496330"/>
<dbReference type="AGR" id="Xenbase:XB-GENE-958561"/>
<dbReference type="CTD" id="496330"/>
<dbReference type="Xenbase" id="XB-GENE-958561">
    <property type="gene designation" value="echdc1.L"/>
</dbReference>
<dbReference type="OMA" id="FTICRPE"/>
<dbReference type="OrthoDB" id="448450at2759"/>
<dbReference type="Proteomes" id="UP000186698">
    <property type="component" value="Chromosome 5L"/>
</dbReference>
<dbReference type="Bgee" id="496330">
    <property type="expression patterns" value="Expressed in egg cell and 19 other cell types or tissues"/>
</dbReference>
<dbReference type="GO" id="GO:0005829">
    <property type="term" value="C:cytosol"/>
    <property type="evidence" value="ECO:0000250"/>
    <property type="project" value="UniProtKB"/>
</dbReference>
<dbReference type="GO" id="GO:0016831">
    <property type="term" value="F:carboxy-lyase activity"/>
    <property type="evidence" value="ECO:0000250"/>
    <property type="project" value="UniProtKB"/>
</dbReference>
<dbReference type="GO" id="GO:0004492">
    <property type="term" value="F:methyl/ethyl malonyl-CoA decarboxylase activity"/>
    <property type="evidence" value="ECO:0007669"/>
    <property type="project" value="UniProtKB-EC"/>
</dbReference>
<dbReference type="GO" id="GO:0006635">
    <property type="term" value="P:fatty acid beta-oxidation"/>
    <property type="evidence" value="ECO:0000318"/>
    <property type="project" value="GO_Central"/>
</dbReference>
<dbReference type="CDD" id="cd06558">
    <property type="entry name" value="crotonase-like"/>
    <property type="match status" value="1"/>
</dbReference>
<dbReference type="FunFam" id="3.90.226.10:FF:000040">
    <property type="entry name" value="Ethylmalonyl-CoA decarboxylase 1"/>
    <property type="match status" value="1"/>
</dbReference>
<dbReference type="Gene3D" id="3.90.226.10">
    <property type="entry name" value="2-enoyl-CoA Hydratase, Chain A, domain 1"/>
    <property type="match status" value="1"/>
</dbReference>
<dbReference type="InterPro" id="IPR029045">
    <property type="entry name" value="ClpP/crotonase-like_dom_sf"/>
</dbReference>
<dbReference type="InterPro" id="IPR018376">
    <property type="entry name" value="Enoyl-CoA_hyd/isom_CS"/>
</dbReference>
<dbReference type="InterPro" id="IPR001753">
    <property type="entry name" value="Enoyl-CoA_hydra/iso"/>
</dbReference>
<dbReference type="PANTHER" id="PTHR11941">
    <property type="entry name" value="ENOYL-COA HYDRATASE-RELATED"/>
    <property type="match status" value="1"/>
</dbReference>
<dbReference type="PANTHER" id="PTHR11941:SF27">
    <property type="entry name" value="ETHYLMALONYL-COA DECARBOXYLASE"/>
    <property type="match status" value="1"/>
</dbReference>
<dbReference type="Pfam" id="PF00378">
    <property type="entry name" value="ECH_1"/>
    <property type="match status" value="1"/>
</dbReference>
<dbReference type="SUPFAM" id="SSF52096">
    <property type="entry name" value="ClpP/crotonase"/>
    <property type="match status" value="1"/>
</dbReference>
<dbReference type="PROSITE" id="PS00166">
    <property type="entry name" value="ENOYL_COA_HYDRATASE"/>
    <property type="match status" value="1"/>
</dbReference>
<accession>Q5HZQ8</accession>
<reference key="1">
    <citation type="submission" date="2005-01" db="EMBL/GenBank/DDBJ databases">
        <authorList>
            <consortium name="NIH - Xenopus Gene Collection (XGC) project"/>
        </authorList>
    </citation>
    <scope>NUCLEOTIDE SEQUENCE [LARGE SCALE MRNA]</scope>
    <source>
        <tissue>Egg</tissue>
    </source>
</reference>
<organism>
    <name type="scientific">Xenopus laevis</name>
    <name type="common">African clawed frog</name>
    <dbReference type="NCBI Taxonomy" id="8355"/>
    <lineage>
        <taxon>Eukaryota</taxon>
        <taxon>Metazoa</taxon>
        <taxon>Chordata</taxon>
        <taxon>Craniata</taxon>
        <taxon>Vertebrata</taxon>
        <taxon>Euteleostomi</taxon>
        <taxon>Amphibia</taxon>
        <taxon>Batrachia</taxon>
        <taxon>Anura</taxon>
        <taxon>Pipoidea</taxon>
        <taxon>Pipidae</taxon>
        <taxon>Xenopodinae</taxon>
        <taxon>Xenopus</taxon>
        <taxon>Xenopus</taxon>
    </lineage>
</organism>
<proteinExistence type="evidence at transcript level"/>
<evidence type="ECO:0000250" key="1">
    <source>
        <dbReference type="UniProtKB" id="Q9D9V3"/>
    </source>
</evidence>
<evidence type="ECO:0000305" key="2"/>
<feature type="chain" id="PRO_0000416273" description="Ethylmalonyl-CoA decarboxylase">
    <location>
        <begin position="1"/>
        <end position="299"/>
    </location>
</feature>
<protein>
    <recommendedName>
        <fullName>Ethylmalonyl-CoA decarboxylase</fullName>
        <ecNumber evidence="1">4.1.1.94</ecNumber>
    </recommendedName>
    <alternativeName>
        <fullName>Enoyl-CoA hydratase domain-containing protein 1</fullName>
    </alternativeName>
    <alternativeName>
        <fullName>Methylmalonyl-CoA decarboxylase</fullName>
        <shortName>MMCD</shortName>
    </alternativeName>
</protein>
<comment type="function">
    <text evidence="1">Decarboxylates ethylmalonyl-CoA, a potentially toxic metabolite, to form butyryl-CoA, suggesting it might be involved in metabolite proofreading. Acts preferentially on (S)-ethylmalonyl-CoA but also has some activity on the (R)-isomer. Also has methylmalonyl-CoA decarboxylase activity at lower level.</text>
</comment>
<comment type="catalytic activity">
    <reaction evidence="1">
        <text>(2S)-ethylmalonyl-CoA + H(+) = butanoyl-CoA + CO2</text>
        <dbReference type="Rhea" id="RHEA:32131"/>
        <dbReference type="ChEBI" id="CHEBI:15378"/>
        <dbReference type="ChEBI" id="CHEBI:16526"/>
        <dbReference type="ChEBI" id="CHEBI:57371"/>
        <dbReference type="ChEBI" id="CHEBI:60909"/>
        <dbReference type="EC" id="4.1.1.94"/>
    </reaction>
    <physiologicalReaction direction="left-to-right" evidence="1">
        <dbReference type="Rhea" id="RHEA:32132"/>
    </physiologicalReaction>
</comment>
<comment type="catalytic activity">
    <reaction evidence="1">
        <text>(S)-methylmalonyl-CoA + H(+) = propanoyl-CoA + CO2</text>
        <dbReference type="Rhea" id="RHEA:61340"/>
        <dbReference type="ChEBI" id="CHEBI:15378"/>
        <dbReference type="ChEBI" id="CHEBI:16526"/>
        <dbReference type="ChEBI" id="CHEBI:57327"/>
        <dbReference type="ChEBI" id="CHEBI:57392"/>
        <dbReference type="EC" id="4.1.1.94"/>
    </reaction>
    <physiologicalReaction direction="left-to-right" evidence="1">
        <dbReference type="Rhea" id="RHEA:61341"/>
    </physiologicalReaction>
</comment>
<comment type="catalytic activity">
    <reaction evidence="1">
        <text>(2R)-ethylmalonyl-CoA + H(+) = butanoyl-CoA + CO2</text>
        <dbReference type="Rhea" id="RHEA:59540"/>
        <dbReference type="ChEBI" id="CHEBI:15378"/>
        <dbReference type="ChEBI" id="CHEBI:16526"/>
        <dbReference type="ChEBI" id="CHEBI:57371"/>
        <dbReference type="ChEBI" id="CHEBI:85316"/>
        <dbReference type="EC" id="4.1.1.94"/>
    </reaction>
    <physiologicalReaction direction="left-to-right" evidence="1">
        <dbReference type="Rhea" id="RHEA:59541"/>
    </physiologicalReaction>
</comment>
<comment type="subcellular location">
    <subcellularLocation>
        <location evidence="1">Cytoplasm</location>
        <location evidence="1">Cytosol</location>
    </subcellularLocation>
</comment>
<comment type="similarity">
    <text evidence="2">Belongs to the enoyl-CoA hydratase/isomerase family.</text>
</comment>
<name>ECHD1_XENLA</name>
<sequence length="299" mass="32656">MGIFVWRSSLSMTNIRWLHHRCLSLYNSSHGFNEAKIKKKLAQFTGGSVDLSKSDDGIAEICINNPTRMNAFTGTMMIELEERISDLENWQDGKGLIVYGAENTFCSGSDLNAVKAISNPQEGMMMCMLMQNTLTRLQRLPLVSVALIQGKALGGGAELCTACDFRLMTEGSEIRFVHKQMGLVPGWGGAARLIHIVGSRHALKLLSGAPRVQPENALELGLADNILTGTEAGVLSEAKNWIMPYIKGPSDVTRAVKKVIISGREQNLEDALRTEKEIFGTVWGGLANLQALAKGTKHK</sequence>
<keyword id="KW-0963">Cytoplasm</keyword>
<keyword id="KW-0456">Lyase</keyword>
<keyword id="KW-1185">Reference proteome</keyword>